<organism>
    <name type="scientific">Gadus morhua</name>
    <name type="common">Atlantic cod</name>
    <dbReference type="NCBI Taxonomy" id="8049"/>
    <lineage>
        <taxon>Eukaryota</taxon>
        <taxon>Metazoa</taxon>
        <taxon>Chordata</taxon>
        <taxon>Craniata</taxon>
        <taxon>Vertebrata</taxon>
        <taxon>Euteleostomi</taxon>
        <taxon>Actinopterygii</taxon>
        <taxon>Neopterygii</taxon>
        <taxon>Teleostei</taxon>
        <taxon>Neoteleostei</taxon>
        <taxon>Acanthomorphata</taxon>
        <taxon>Zeiogadaria</taxon>
        <taxon>Gadariae</taxon>
        <taxon>Gadiformes</taxon>
        <taxon>Gadoidei</taxon>
        <taxon>Gadidae</taxon>
        <taxon>Gadus</taxon>
    </lineage>
</organism>
<protein>
    <recommendedName>
        <fullName>Hemoglobin subunit beta-1</fullName>
    </recommendedName>
    <alternativeName>
        <fullName>Beta-1-globin</fullName>
    </alternativeName>
    <alternativeName>
        <fullName>Hemoglobin beta-1 chain</fullName>
    </alternativeName>
</protein>
<reference evidence="3" key="1">
    <citation type="journal article" date="2006" name="J. Biol. Chem.">
        <title>The oxygen transport system in three species of the boreal fish family Gadidae. Molecular phylogeny of hemoglobin.</title>
        <authorList>
            <person name="Verde C."/>
            <person name="Balestrieri M."/>
            <person name="de Pascale D."/>
            <person name="Pagnozzi D."/>
            <person name="Lecointre G."/>
            <person name="di Prisco G."/>
        </authorList>
    </citation>
    <scope>PROTEIN SEQUENCE OF 2-147</scope>
    <scope>FUNCTION</scope>
    <scope>SUBUNIT</scope>
    <source>
        <tissue evidence="2">Blood</tissue>
    </source>
</reference>
<evidence type="ECO:0000255" key="1">
    <source>
        <dbReference type="PROSITE-ProRule" id="PRU00238"/>
    </source>
</evidence>
<evidence type="ECO:0000269" key="2">
    <source>
    </source>
</evidence>
<evidence type="ECO:0000305" key="3"/>
<keyword id="KW-0903">Direct protein sequencing</keyword>
<keyword id="KW-0349">Heme</keyword>
<keyword id="KW-0408">Iron</keyword>
<keyword id="KW-0479">Metal-binding</keyword>
<keyword id="KW-0561">Oxygen transport</keyword>
<keyword id="KW-1185">Reference proteome</keyword>
<keyword id="KW-0813">Transport</keyword>
<accession>P84610</accession>
<sequence length="147" mass="16326">MVEWTAAERRHVEAVWSKIDIDVCGPLALQRCLIVYPWTQRYFGEFGDLSTDAAIVGNPKVAAHGVVALTGLRTALDHMDEIKSTYAALSVLHSEKLHVDPDNFRLLCECLTIVVAGKMGKKLSPEMQAAWQKYLCAVVSALGRQYH</sequence>
<comment type="function">
    <text evidence="2 3">Involved in oxygen transport from gills to the various peripheral tissues.</text>
</comment>
<comment type="subunit">
    <text evidence="2">Hb 1 is a heterotetramer of two alpha-1 and two beta-1 chains.</text>
</comment>
<comment type="tissue specificity">
    <text evidence="3">Red blood cells.</text>
</comment>
<comment type="similarity">
    <text evidence="1">Belongs to the globin family.</text>
</comment>
<gene>
    <name type="primary">hbb1</name>
</gene>
<feature type="initiator methionine" description="Removed" evidence="2">
    <location>
        <position position="1"/>
    </location>
</feature>
<feature type="chain" id="PRO_0000247584" description="Hemoglobin subunit beta-1">
    <location>
        <begin position="2"/>
        <end position="147"/>
    </location>
</feature>
<feature type="domain" description="Globin" evidence="1">
    <location>
        <begin position="3"/>
        <end position="147"/>
    </location>
</feature>
<feature type="binding site" description="distal binding residue" evidence="1">
    <location>
        <position position="64"/>
    </location>
    <ligand>
        <name>heme b</name>
        <dbReference type="ChEBI" id="CHEBI:60344"/>
    </ligand>
    <ligandPart>
        <name>Fe</name>
        <dbReference type="ChEBI" id="CHEBI:18248"/>
    </ligandPart>
</feature>
<feature type="binding site" description="proximal binding residue" evidence="1">
    <location>
        <position position="93"/>
    </location>
    <ligand>
        <name>heme b</name>
        <dbReference type="ChEBI" id="CHEBI:60344"/>
    </ligand>
    <ligandPart>
        <name>Fe</name>
        <dbReference type="ChEBI" id="CHEBI:18248"/>
    </ligandPart>
</feature>
<proteinExistence type="evidence at protein level"/>
<dbReference type="SMR" id="P84610"/>
<dbReference type="STRING" id="8049.ENSGMOP00000021984"/>
<dbReference type="Proteomes" id="UP000694546">
    <property type="component" value="Unplaced"/>
</dbReference>
<dbReference type="GO" id="GO:0072562">
    <property type="term" value="C:blood microparticle"/>
    <property type="evidence" value="ECO:0007669"/>
    <property type="project" value="TreeGrafter"/>
</dbReference>
<dbReference type="GO" id="GO:0031838">
    <property type="term" value="C:haptoglobin-hemoglobin complex"/>
    <property type="evidence" value="ECO:0007669"/>
    <property type="project" value="TreeGrafter"/>
</dbReference>
<dbReference type="GO" id="GO:0005833">
    <property type="term" value="C:hemoglobin complex"/>
    <property type="evidence" value="ECO:0007669"/>
    <property type="project" value="InterPro"/>
</dbReference>
<dbReference type="GO" id="GO:0031720">
    <property type="term" value="F:haptoglobin binding"/>
    <property type="evidence" value="ECO:0007669"/>
    <property type="project" value="TreeGrafter"/>
</dbReference>
<dbReference type="GO" id="GO:0020037">
    <property type="term" value="F:heme binding"/>
    <property type="evidence" value="ECO:0007669"/>
    <property type="project" value="InterPro"/>
</dbReference>
<dbReference type="GO" id="GO:0046872">
    <property type="term" value="F:metal ion binding"/>
    <property type="evidence" value="ECO:0007669"/>
    <property type="project" value="UniProtKB-KW"/>
</dbReference>
<dbReference type="GO" id="GO:0043177">
    <property type="term" value="F:organic acid binding"/>
    <property type="evidence" value="ECO:0007669"/>
    <property type="project" value="TreeGrafter"/>
</dbReference>
<dbReference type="GO" id="GO:0019825">
    <property type="term" value="F:oxygen binding"/>
    <property type="evidence" value="ECO:0007669"/>
    <property type="project" value="InterPro"/>
</dbReference>
<dbReference type="GO" id="GO:0005344">
    <property type="term" value="F:oxygen carrier activity"/>
    <property type="evidence" value="ECO:0007669"/>
    <property type="project" value="UniProtKB-KW"/>
</dbReference>
<dbReference type="GO" id="GO:0004601">
    <property type="term" value="F:peroxidase activity"/>
    <property type="evidence" value="ECO:0007669"/>
    <property type="project" value="TreeGrafter"/>
</dbReference>
<dbReference type="GO" id="GO:0042744">
    <property type="term" value="P:hydrogen peroxide catabolic process"/>
    <property type="evidence" value="ECO:0007669"/>
    <property type="project" value="TreeGrafter"/>
</dbReference>
<dbReference type="CDD" id="cd08925">
    <property type="entry name" value="Hb-beta-like"/>
    <property type="match status" value="1"/>
</dbReference>
<dbReference type="FunFam" id="1.10.490.10:FF:000001">
    <property type="entry name" value="Hemoglobin subunit beta"/>
    <property type="match status" value="1"/>
</dbReference>
<dbReference type="Gene3D" id="1.10.490.10">
    <property type="entry name" value="Globins"/>
    <property type="match status" value="1"/>
</dbReference>
<dbReference type="InterPro" id="IPR000971">
    <property type="entry name" value="Globin"/>
</dbReference>
<dbReference type="InterPro" id="IPR009050">
    <property type="entry name" value="Globin-like_sf"/>
</dbReference>
<dbReference type="InterPro" id="IPR012292">
    <property type="entry name" value="Globin/Proto"/>
</dbReference>
<dbReference type="InterPro" id="IPR002337">
    <property type="entry name" value="Hemoglobin_b"/>
</dbReference>
<dbReference type="InterPro" id="IPR050056">
    <property type="entry name" value="Hemoglobin_oxygen_transport"/>
</dbReference>
<dbReference type="PANTHER" id="PTHR11442">
    <property type="entry name" value="HEMOGLOBIN FAMILY MEMBER"/>
    <property type="match status" value="1"/>
</dbReference>
<dbReference type="PANTHER" id="PTHR11442:SF7">
    <property type="entry name" value="HEMOGLOBIN SUBUNIT EPSILON"/>
    <property type="match status" value="1"/>
</dbReference>
<dbReference type="Pfam" id="PF00042">
    <property type="entry name" value="Globin"/>
    <property type="match status" value="1"/>
</dbReference>
<dbReference type="PRINTS" id="PR00814">
    <property type="entry name" value="BETAHAEM"/>
</dbReference>
<dbReference type="SUPFAM" id="SSF46458">
    <property type="entry name" value="Globin-like"/>
    <property type="match status" value="1"/>
</dbReference>
<dbReference type="PROSITE" id="PS01033">
    <property type="entry name" value="GLOBIN"/>
    <property type="match status" value="1"/>
</dbReference>
<name>HBB1_GADMO</name>